<organism>
    <name type="scientific">Phytophthora infestans (strain T30-4)</name>
    <name type="common">Potato late blight agent</name>
    <dbReference type="NCBI Taxonomy" id="403677"/>
    <lineage>
        <taxon>Eukaryota</taxon>
        <taxon>Sar</taxon>
        <taxon>Stramenopiles</taxon>
        <taxon>Oomycota</taxon>
        <taxon>Peronosporales</taxon>
        <taxon>Peronosporaceae</taxon>
        <taxon>Phytophthora</taxon>
    </lineage>
</organism>
<reference key="1">
    <citation type="journal article" date="2009" name="Nature">
        <title>Genome sequence and analysis of the Irish potato famine pathogen Phytophthora infestans.</title>
        <authorList>
            <consortium name="The Broad Institute Genome Sequencing Platform"/>
            <person name="Haas B.J."/>
            <person name="Kamoun S."/>
            <person name="Zody M.C."/>
            <person name="Jiang R.H."/>
            <person name="Handsaker R.E."/>
            <person name="Cano L.M."/>
            <person name="Grabherr M."/>
            <person name="Kodira C.D."/>
            <person name="Raffaele S."/>
            <person name="Torto-Alalibo T."/>
            <person name="Bozkurt T.O."/>
            <person name="Ah-Fong A.M."/>
            <person name="Alvarado L."/>
            <person name="Anderson V.L."/>
            <person name="Armstrong M.R."/>
            <person name="Avrova A."/>
            <person name="Baxter L."/>
            <person name="Beynon J."/>
            <person name="Boevink P.C."/>
            <person name="Bollmann S.R."/>
            <person name="Bos J.I."/>
            <person name="Bulone V."/>
            <person name="Cai G."/>
            <person name="Cakir C."/>
            <person name="Carrington J.C."/>
            <person name="Chawner M."/>
            <person name="Conti L."/>
            <person name="Costanzo S."/>
            <person name="Ewan R."/>
            <person name="Fahlgren N."/>
            <person name="Fischbach M.A."/>
            <person name="Fugelstad J."/>
            <person name="Gilroy E.M."/>
            <person name="Gnerre S."/>
            <person name="Green P.J."/>
            <person name="Grenville-Briggs L.J."/>
            <person name="Griffith J."/>
            <person name="Grunwald N.J."/>
            <person name="Horn K."/>
            <person name="Horner N.R."/>
            <person name="Hu C.H."/>
            <person name="Huitema E."/>
            <person name="Jeong D.H."/>
            <person name="Jones A.M."/>
            <person name="Jones J.D."/>
            <person name="Jones R.W."/>
            <person name="Karlsson E.K."/>
            <person name="Kunjeti S.G."/>
            <person name="Lamour K."/>
            <person name="Liu Z."/>
            <person name="Ma L."/>
            <person name="Maclean D."/>
            <person name="Chibucos M.C."/>
            <person name="McDonald H."/>
            <person name="McWalters J."/>
            <person name="Meijer H.J."/>
            <person name="Morgan W."/>
            <person name="Morris P.F."/>
            <person name="Munro C.A."/>
            <person name="O'Neill K."/>
            <person name="Ospina-Giraldo M."/>
            <person name="Pinzon A."/>
            <person name="Pritchard L."/>
            <person name="Ramsahoye B."/>
            <person name="Ren Q."/>
            <person name="Restrepo S."/>
            <person name="Roy S."/>
            <person name="Sadanandom A."/>
            <person name="Savidor A."/>
            <person name="Schornack S."/>
            <person name="Schwartz D.C."/>
            <person name="Schumann U.D."/>
            <person name="Schwessinger B."/>
            <person name="Seyer L."/>
            <person name="Sharpe T."/>
            <person name="Silvar C."/>
            <person name="Song J."/>
            <person name="Studholme D.J."/>
            <person name="Sykes S."/>
            <person name="Thines M."/>
            <person name="van de Vondervoort P.J."/>
            <person name="Phuntumart V."/>
            <person name="Wawra S."/>
            <person name="Weide R."/>
            <person name="Win J."/>
            <person name="Young C."/>
            <person name="Zhou S."/>
            <person name="Fry W."/>
            <person name="Meyers B.C."/>
            <person name="van West P."/>
            <person name="Ristaino J."/>
            <person name="Govers F."/>
            <person name="Birch P.R."/>
            <person name="Whisson S.C."/>
            <person name="Judelson H.S."/>
            <person name="Nusbaum C."/>
        </authorList>
    </citation>
    <scope>NUCLEOTIDE SEQUENCE [LARGE SCALE GENOMIC DNA]</scope>
    <source>
        <strain>T30-4</strain>
    </source>
</reference>
<reference key="2">
    <citation type="journal article" date="2017" name="BMC Genomics">
        <title>RNA-seq of life stages of the oomycete Phytophthora infestans reveals dynamic changes in metabolic, signal transduction, and pathogenesis genes and a major role for calcium signaling in development.</title>
        <authorList>
            <person name="Ah-Fong A.M."/>
            <person name="Kim K.S."/>
            <person name="Judelson H.S."/>
        </authorList>
    </citation>
    <scope>INDUCTION</scope>
</reference>
<reference key="3">
    <citation type="journal article" date="2017" name="Front. Plant Sci.">
        <title>Conserved RXLR effector genes of Phytophthora infestans expressed at the early stage of potato infection are suppressive to host defense.</title>
        <authorList>
            <person name="Yin J."/>
            <person name="Gu B."/>
            <person name="Huang G."/>
            <person name="Tian Y."/>
            <person name="Quan J."/>
            <person name="Lindqvist-Kreuze H."/>
            <person name="Shan W."/>
        </authorList>
    </citation>
    <scope>INDUCTION</scope>
    <scope>DOMAIN</scope>
</reference>
<reference key="4">
    <citation type="journal article" date="2019" name="J. Exp. Bot.">
        <title>Phytophthora infestans RXLR effectors act in concert at diverse subcellular locations to enhance host colonization.</title>
        <authorList>
            <person name="Wang S."/>
            <person name="McLellan H."/>
            <person name="Bukharova T."/>
            <person name="He Q."/>
            <person name="Murphy F."/>
            <person name="Shi J."/>
            <person name="Sun S."/>
            <person name="van Weymers P."/>
            <person name="Ren Y."/>
            <person name="Thilliez G."/>
            <person name="Wang H."/>
            <person name="Chen X."/>
            <person name="Engelhardt S."/>
            <person name="Vleeshouwers V."/>
            <person name="Gilroy E.M."/>
            <person name="Whisson S.C."/>
            <person name="Hein I."/>
            <person name="Wang X."/>
            <person name="Tian Z."/>
            <person name="Birch P.R.J."/>
            <person name="Boevink P.C."/>
        </authorList>
    </citation>
    <scope>FUNCTION</scope>
    <scope>SUBCELLULAR LOCATION</scope>
</reference>
<gene>
    <name type="ORF">PITG_15278</name>
</gene>
<feature type="signal peptide" evidence="1">
    <location>
        <begin position="1"/>
        <end position="24"/>
    </location>
</feature>
<feature type="chain" id="PRO_5003013639" description="RxLR effector protein PITG_15278">
    <location>
        <begin position="25"/>
        <end position="519"/>
    </location>
</feature>
<feature type="short sequence motif" description="RxLR-dEER" evidence="7">
    <location>
        <begin position="49"/>
        <end position="59"/>
    </location>
</feature>
<comment type="function">
    <text evidence="4">Effector that enhances P.infestans colonization of Nicotiana benthamiana leaves.</text>
</comment>
<comment type="subcellular location">
    <subcellularLocation>
        <location evidence="4">Secreted</location>
    </subcellularLocation>
    <subcellularLocation>
        <location evidence="4">Host cytoplasm</location>
    </subcellularLocation>
</comment>
<comment type="induction">
    <text evidence="2 3">Expression is induced during host plant infection.</text>
</comment>
<comment type="domain">
    <text evidence="7">The RxLR-dEER motif acts to carry the protein into the host cell cytoplasm through binding to cell surface phosphatidylinositol-3-phosphate.</text>
</comment>
<comment type="similarity">
    <text evidence="6">Belongs to the RxLR effector family.</text>
</comment>
<evidence type="ECO:0000255" key="1"/>
<evidence type="ECO:0000269" key="2">
    <source>
    </source>
</evidence>
<evidence type="ECO:0000269" key="3">
    <source>
    </source>
</evidence>
<evidence type="ECO:0000269" key="4">
    <source>
    </source>
</evidence>
<evidence type="ECO:0000303" key="5">
    <source>
    </source>
</evidence>
<evidence type="ECO:0000305" key="6"/>
<evidence type="ECO:0000305" key="7">
    <source>
    </source>
</evidence>
<protein>
    <recommendedName>
        <fullName evidence="5">RxLR effector protein PITG_15278</fullName>
    </recommendedName>
</protein>
<proteinExistence type="evidence at transcript level"/>
<keyword id="KW-1035">Host cytoplasm</keyword>
<keyword id="KW-1185">Reference proteome</keyword>
<keyword id="KW-0964">Secreted</keyword>
<keyword id="KW-0732">Signal</keyword>
<keyword id="KW-0843">Virulence</keyword>
<dbReference type="EMBL" id="DS028152">
    <property type="protein sequence ID" value="EEY62846.1"/>
    <property type="molecule type" value="Genomic_DNA"/>
</dbReference>
<dbReference type="RefSeq" id="XP_002898721.1">
    <property type="nucleotide sequence ID" value="XM_002898675.1"/>
</dbReference>
<dbReference type="SMR" id="D0NQB4"/>
<dbReference type="STRING" id="403677.D0NQB4"/>
<dbReference type="EnsemblProtists" id="PITG_15278T0">
    <property type="protein sequence ID" value="PITG_15278T0"/>
    <property type="gene ID" value="PITG_15278"/>
</dbReference>
<dbReference type="GeneID" id="9479248"/>
<dbReference type="KEGG" id="pif:PITG_15278"/>
<dbReference type="VEuPathDB" id="FungiDB:PITG_15278"/>
<dbReference type="eggNOG" id="ENOG502RG96">
    <property type="taxonomic scope" value="Eukaryota"/>
</dbReference>
<dbReference type="HOGENOM" id="CLU_021192_3_2_1"/>
<dbReference type="InParanoid" id="D0NQB4"/>
<dbReference type="OMA" id="RYYQDHG"/>
<dbReference type="OrthoDB" id="127177at2759"/>
<dbReference type="Proteomes" id="UP000006643">
    <property type="component" value="Partially assembled WGS sequence"/>
</dbReference>
<dbReference type="GO" id="GO:0005576">
    <property type="term" value="C:extracellular region"/>
    <property type="evidence" value="ECO:0007669"/>
    <property type="project" value="UniProtKB-SubCell"/>
</dbReference>
<dbReference type="GO" id="GO:0030430">
    <property type="term" value="C:host cell cytoplasm"/>
    <property type="evidence" value="ECO:0007669"/>
    <property type="project" value="UniProtKB-SubCell"/>
</dbReference>
<dbReference type="InterPro" id="IPR054463">
    <property type="entry name" value="PexRD54_WY"/>
</dbReference>
<dbReference type="Pfam" id="PF22748">
    <property type="entry name" value="PexRD54_WY"/>
    <property type="match status" value="1"/>
</dbReference>
<name>RXLRS_PHYIT</name>
<accession>D0NQB4</accession>
<sequence length="519" mass="59726">MHFIYRVVLVLAAFALFKVDSISAGVTFNEEHLTIPRFTRPVEENLIKRQLRVMDDNERGFPSGPSLEKIEAMFQSLTNKITTKSKPSQRDVPDEKLSQLLGAAKPVNKAVEAAGRLKTLQTQKWLDEGKSTQEVFQLLELNKFMVPNFKKIEGTVFGLPDFNTWVNYVDDFNAKNPTKKESMIPTLRTIYSDEGLTRALELAKTYSTTNALATKLRKEQIQRWLDDAQTPKYVFEMFMIDDKVDGLLTNPRFIAWTKYVDDFNLQYPTSRASMEPPIAAHYGDDAVFAMLEAAKKVQLTENVASRLQAEQIKRLLNSNRSPEYVFEAFNLHETGDNLLSTPMFKTWFNYLESFNKKNTDKETLLAPIHRYYHDHGVAKIVAEGMKNPSTVELSKQLQIQRYKRWLHAERPPRDAFNTFILEKPGADVIIRYNERLDGKLYQVRLNKVSDGLLSSPEFQLWSKYLDDWNTKYPDQKQSMAKIFQALFTEDALAKMIMAARNNPSTQKIASLLENAFAKV</sequence>